<dbReference type="EC" id="2.5.1.27"/>
<dbReference type="EMBL" id="M91610">
    <property type="protein sequence ID" value="AAA98150.1"/>
    <property type="molecule type" value="Genomic_DNA"/>
</dbReference>
<dbReference type="EMBL" id="CP000637">
    <property type="protein sequence ID" value="ACM39711.1"/>
    <property type="molecule type" value="Genomic_DNA"/>
</dbReference>
<dbReference type="PIR" id="S30106">
    <property type="entry name" value="S30106"/>
</dbReference>
<dbReference type="RefSeq" id="WP_012649069.1">
    <property type="nucleotide sequence ID" value="NC_011982.1"/>
</dbReference>
<dbReference type="SMR" id="Q04590"/>
<dbReference type="KEGG" id="avi:Avi_8294"/>
<dbReference type="HOGENOM" id="CLU_1115409_0_0_5"/>
<dbReference type="Proteomes" id="UP000001596">
    <property type="component" value="Plasmid pTiS4"/>
</dbReference>
<dbReference type="GO" id="GO:0009824">
    <property type="term" value="F:AMP dimethylallyltransferase activity"/>
    <property type="evidence" value="ECO:0007669"/>
    <property type="project" value="UniProtKB-EC"/>
</dbReference>
<dbReference type="GO" id="GO:0009691">
    <property type="term" value="P:cytokinin biosynthetic process"/>
    <property type="evidence" value="ECO:0007669"/>
    <property type="project" value="UniProtKB-KW"/>
</dbReference>
<dbReference type="Gene3D" id="1.10.287.890">
    <property type="entry name" value="Crystal structure of tRNA isopentenylpyrophosphate transferase (bh2366) domain"/>
    <property type="match status" value="1"/>
</dbReference>
<dbReference type="Gene3D" id="3.40.50.300">
    <property type="entry name" value="P-loop containing nucleotide triphosphate hydrolases"/>
    <property type="match status" value="1"/>
</dbReference>
<dbReference type="InterPro" id="IPR027417">
    <property type="entry name" value="P-loop_NTPase"/>
</dbReference>
<dbReference type="InterPro" id="IPR002648">
    <property type="entry name" value="Tzs"/>
</dbReference>
<dbReference type="Pfam" id="PF01745">
    <property type="entry name" value="IPT"/>
    <property type="match status" value="1"/>
</dbReference>
<dbReference type="PIRSF" id="PIRSF000507">
    <property type="entry name" value="IPT"/>
    <property type="match status" value="1"/>
</dbReference>
<dbReference type="SUPFAM" id="SSF52540">
    <property type="entry name" value="P-loop containing nucleoside triphosphate hydrolases"/>
    <property type="match status" value="1"/>
</dbReference>
<geneLocation type="plasmid">
    <name>pTiS4</name>
</geneLocation>
<gene>
    <name type="primary">ipt</name>
    <name type="ordered locus">Avi_8294</name>
</gene>
<proteinExistence type="inferred from homology"/>
<feature type="chain" id="PRO_0000216434" description="Adenylate dimethylallyltransferase">
    <location>
        <begin position="1"/>
        <end position="236"/>
    </location>
</feature>
<comment type="function">
    <text evidence="1">Transfers dimethylallyl groups to AMP as part of the biosynthesis of cytokinin phytohormones.</text>
</comment>
<comment type="catalytic activity">
    <reaction>
        <text>dimethylallyl diphosphate + AMP = N(6)-(dimethylallyl)adenosine 5'-phosphate + diphosphate</text>
        <dbReference type="Rhea" id="RHEA:15285"/>
        <dbReference type="ChEBI" id="CHEBI:33019"/>
        <dbReference type="ChEBI" id="CHEBI:57526"/>
        <dbReference type="ChEBI" id="CHEBI:57623"/>
        <dbReference type="ChEBI" id="CHEBI:456215"/>
        <dbReference type="EC" id="2.5.1.27"/>
    </reaction>
</comment>
<comment type="similarity">
    <text evidence="2">Belongs to the isopentenyl transferase family.</text>
</comment>
<name>IPT_ALLAM</name>
<organism>
    <name type="scientific">Allorhizobium ampelinum (strain ATCC BAA-846 / DSM 112012 / S4)</name>
    <name type="common">Agrobacterium vitis (strain S4)</name>
    <dbReference type="NCBI Taxonomy" id="311402"/>
    <lineage>
        <taxon>Bacteria</taxon>
        <taxon>Pseudomonadati</taxon>
        <taxon>Pseudomonadota</taxon>
        <taxon>Alphaproteobacteria</taxon>
        <taxon>Hyphomicrobiales</taxon>
        <taxon>Rhizobiaceae</taxon>
        <taxon>Rhizobium/Agrobacterium group</taxon>
        <taxon>Allorhizobium</taxon>
        <taxon>Allorhizobium ampelinum</taxon>
    </lineage>
</organism>
<reference key="1">
    <citation type="journal article" date="1992" name="Mol. Gen. Genet.">
        <title>Organization and functional analysis of three T-DNAs from the vitopine Ti plasmid pTiS4.</title>
        <authorList>
            <person name="Canaday J."/>
            <person name="Gerard J.-C."/>
            <person name="Crouzet P."/>
            <person name="Otten L."/>
        </authorList>
    </citation>
    <scope>NUCLEOTIDE SEQUENCE [GENOMIC DNA]</scope>
</reference>
<reference key="2">
    <citation type="journal article" date="2009" name="J. Bacteriol.">
        <title>Genome sequences of three Agrobacterium biovars help elucidate the evolution of multichromosome genomes in bacteria.</title>
        <authorList>
            <person name="Slater S.C."/>
            <person name="Goldman B.S."/>
            <person name="Goodner B."/>
            <person name="Setubal J.C."/>
            <person name="Farrand S.K."/>
            <person name="Nester E.W."/>
            <person name="Burr T.J."/>
            <person name="Banta L."/>
            <person name="Dickerman A.W."/>
            <person name="Paulsen I."/>
            <person name="Otten L."/>
            <person name="Suen G."/>
            <person name="Welch R."/>
            <person name="Almeida N.F."/>
            <person name="Arnold F."/>
            <person name="Burton O.T."/>
            <person name="Du Z."/>
            <person name="Ewing A."/>
            <person name="Godsy E."/>
            <person name="Heisel S."/>
            <person name="Houmiel K.L."/>
            <person name="Jhaveri J."/>
            <person name="Lu J."/>
            <person name="Miller N.M."/>
            <person name="Norton S."/>
            <person name="Chen Q."/>
            <person name="Phoolcharoen W."/>
            <person name="Ohlin V."/>
            <person name="Ondrusek D."/>
            <person name="Pride N."/>
            <person name="Stricklin S.L."/>
            <person name="Sun J."/>
            <person name="Wheeler C."/>
            <person name="Wilson L."/>
            <person name="Zhu H."/>
            <person name="Wood D.W."/>
        </authorList>
    </citation>
    <scope>NUCLEOTIDE SEQUENCE [LARGE SCALE GENOMIC DNA]</scope>
    <source>
        <strain>ATCC BAA-846 / DSM 112012 / S4</strain>
    </source>
</reference>
<accession>Q04590</accession>
<accession>B9K457</accession>
<sequence>MEAHLIFGPTSTGKTSVAIALAKRTGFPVIVLDRIQCYSQLSVGGGRPSAAEFQGTRRIYLIEGSLDEGVISAERAHECLVAAVEAHKPEGGVILEGGSISLFKRMAQSSYWNCGFTWHVTRLHLGGEEIFLAAAKKRINQMMQPDEQGNSFLGELVSVWKTTALRATLEGICGYRYAIEFAGKQGLEMDALTSLNRRQLEQLVHGMAHEYLCYARQQEQELPLPSLAGGEGPPFQ</sequence>
<evidence type="ECO:0000250" key="1"/>
<evidence type="ECO:0000305" key="2"/>
<keyword id="KW-0192">Crown gall tumor</keyword>
<keyword id="KW-0203">Cytokinin biosynthesis</keyword>
<keyword id="KW-0614">Plasmid</keyword>
<keyword id="KW-1185">Reference proteome</keyword>
<keyword id="KW-0808">Transferase</keyword>
<protein>
    <recommendedName>
        <fullName>Adenylate dimethylallyltransferase</fullName>
        <ecNumber>2.5.1.27</ecNumber>
    </recommendedName>
    <alternativeName>
        <fullName>Dimethylallyl transferase</fullName>
    </alternativeName>
    <alternativeName>
        <fullName>Isopentenyl transferase</fullName>
    </alternativeName>
</protein>